<proteinExistence type="inferred from homology"/>
<sequence>MLPAQKHTLETLLENSVKQVVQASKGDADAAFVLPAIALERPKVAAHGDVACNVALQLAKPLGANPRQLAEQIVAALTAQPEAAGLVDAAEIAGPGFINLRLTPASKQAVIGAVLAQGRAFGASERDHDKRVLLEFVSANPTGPLHVGHGRQAALGDALANVLASQGYAVHREFYYNDAGVQIGNLAISTQARARGLKPGDAGWPEAAYNGEYIADIARDYLNGETVAASDGEPVTGKRDVEDLEAIRKFAVTYLRREQDMDLKAFGVKFDQYYLESSLYTEGRVEKTVDALIAAGMTYEQEGALWLRTTDEGDDKDRVMRKTDGTYTYFVPDVAYHVTKWERGFTKVINIQGSDHHGTIARVRAGLQGLHIGIPKGYPDYVLHKMVTVMRDGQEVKISKRAGSYVTVRDLIEWSGGATPGSEGSPELLDEATITRGRDAVRFFLISRKADTEFVFDIDLALKQNDENPVYYVQYAHARICSVINEWKSRYGATDALLPGADLSPLDSKQAMALMQKLAEYPDVLAHAAGELAPHAVAFYLRELASEFHSFYNAERVLVDEQAPRTARVALLAATRQVLENGLAMLGVSAPSKM</sequence>
<keyword id="KW-0030">Aminoacyl-tRNA synthetase</keyword>
<keyword id="KW-0067">ATP-binding</keyword>
<keyword id="KW-0963">Cytoplasm</keyword>
<keyword id="KW-0436">Ligase</keyword>
<keyword id="KW-0547">Nucleotide-binding</keyword>
<keyword id="KW-0648">Protein biosynthesis</keyword>
<protein>
    <recommendedName>
        <fullName evidence="1">Arginine--tRNA ligase</fullName>
        <ecNumber evidence="1">6.1.1.19</ecNumber>
    </recommendedName>
    <alternativeName>
        <fullName evidence="1">Arginyl-tRNA synthetase</fullName>
        <shortName evidence="1">ArgRS</shortName>
    </alternativeName>
</protein>
<accession>A2S7P3</accession>
<evidence type="ECO:0000255" key="1">
    <source>
        <dbReference type="HAMAP-Rule" id="MF_00123"/>
    </source>
</evidence>
<name>SYR_BURM9</name>
<organism>
    <name type="scientific">Burkholderia mallei (strain NCTC 10229)</name>
    <dbReference type="NCBI Taxonomy" id="412022"/>
    <lineage>
        <taxon>Bacteria</taxon>
        <taxon>Pseudomonadati</taxon>
        <taxon>Pseudomonadota</taxon>
        <taxon>Betaproteobacteria</taxon>
        <taxon>Burkholderiales</taxon>
        <taxon>Burkholderiaceae</taxon>
        <taxon>Burkholderia</taxon>
        <taxon>pseudomallei group</taxon>
    </lineage>
</organism>
<comment type="catalytic activity">
    <reaction evidence="1">
        <text>tRNA(Arg) + L-arginine + ATP = L-arginyl-tRNA(Arg) + AMP + diphosphate</text>
        <dbReference type="Rhea" id="RHEA:20301"/>
        <dbReference type="Rhea" id="RHEA-COMP:9658"/>
        <dbReference type="Rhea" id="RHEA-COMP:9673"/>
        <dbReference type="ChEBI" id="CHEBI:30616"/>
        <dbReference type="ChEBI" id="CHEBI:32682"/>
        <dbReference type="ChEBI" id="CHEBI:33019"/>
        <dbReference type="ChEBI" id="CHEBI:78442"/>
        <dbReference type="ChEBI" id="CHEBI:78513"/>
        <dbReference type="ChEBI" id="CHEBI:456215"/>
        <dbReference type="EC" id="6.1.1.19"/>
    </reaction>
</comment>
<comment type="subunit">
    <text evidence="1">Monomer.</text>
</comment>
<comment type="subcellular location">
    <subcellularLocation>
        <location evidence="1">Cytoplasm</location>
    </subcellularLocation>
</comment>
<comment type="similarity">
    <text evidence="1">Belongs to the class-I aminoacyl-tRNA synthetase family.</text>
</comment>
<reference key="1">
    <citation type="journal article" date="2010" name="Genome Biol. Evol.">
        <title>Continuing evolution of Burkholderia mallei through genome reduction and large-scale rearrangements.</title>
        <authorList>
            <person name="Losada L."/>
            <person name="Ronning C.M."/>
            <person name="DeShazer D."/>
            <person name="Woods D."/>
            <person name="Fedorova N."/>
            <person name="Kim H.S."/>
            <person name="Shabalina S.A."/>
            <person name="Pearson T.R."/>
            <person name="Brinkac L."/>
            <person name="Tan P."/>
            <person name="Nandi T."/>
            <person name="Crabtree J."/>
            <person name="Badger J."/>
            <person name="Beckstrom-Sternberg S."/>
            <person name="Saqib M."/>
            <person name="Schutzer S.E."/>
            <person name="Keim P."/>
            <person name="Nierman W.C."/>
        </authorList>
    </citation>
    <scope>NUCLEOTIDE SEQUENCE [LARGE SCALE GENOMIC DNA]</scope>
    <source>
        <strain>NCTC 10229</strain>
    </source>
</reference>
<dbReference type="EC" id="6.1.1.19" evidence="1"/>
<dbReference type="EMBL" id="CP000546">
    <property type="protein sequence ID" value="ABN02334.1"/>
    <property type="molecule type" value="Genomic_DNA"/>
</dbReference>
<dbReference type="RefSeq" id="WP_004189649.1">
    <property type="nucleotide sequence ID" value="NC_008836.1"/>
</dbReference>
<dbReference type="SMR" id="A2S7P3"/>
<dbReference type="GeneID" id="92977866"/>
<dbReference type="KEGG" id="bml:BMA10229_A1997"/>
<dbReference type="HOGENOM" id="CLU_006406_0_1_4"/>
<dbReference type="Proteomes" id="UP000002283">
    <property type="component" value="Chromosome I"/>
</dbReference>
<dbReference type="GO" id="GO:0005737">
    <property type="term" value="C:cytoplasm"/>
    <property type="evidence" value="ECO:0007669"/>
    <property type="project" value="UniProtKB-SubCell"/>
</dbReference>
<dbReference type="GO" id="GO:0004814">
    <property type="term" value="F:arginine-tRNA ligase activity"/>
    <property type="evidence" value="ECO:0007669"/>
    <property type="project" value="UniProtKB-UniRule"/>
</dbReference>
<dbReference type="GO" id="GO:0005524">
    <property type="term" value="F:ATP binding"/>
    <property type="evidence" value="ECO:0007669"/>
    <property type="project" value="UniProtKB-UniRule"/>
</dbReference>
<dbReference type="GO" id="GO:0006420">
    <property type="term" value="P:arginyl-tRNA aminoacylation"/>
    <property type="evidence" value="ECO:0007669"/>
    <property type="project" value="UniProtKB-UniRule"/>
</dbReference>
<dbReference type="CDD" id="cd07956">
    <property type="entry name" value="Anticodon_Ia_Arg"/>
    <property type="match status" value="1"/>
</dbReference>
<dbReference type="CDD" id="cd00671">
    <property type="entry name" value="ArgRS_core"/>
    <property type="match status" value="1"/>
</dbReference>
<dbReference type="FunFam" id="1.10.730.10:FF:000008">
    <property type="entry name" value="Arginine--tRNA ligase"/>
    <property type="match status" value="1"/>
</dbReference>
<dbReference type="FunFam" id="3.40.50.620:FF:000062">
    <property type="entry name" value="Arginine--tRNA ligase"/>
    <property type="match status" value="1"/>
</dbReference>
<dbReference type="Gene3D" id="3.30.1360.70">
    <property type="entry name" value="Arginyl tRNA synthetase N-terminal domain"/>
    <property type="match status" value="1"/>
</dbReference>
<dbReference type="Gene3D" id="3.40.50.620">
    <property type="entry name" value="HUPs"/>
    <property type="match status" value="1"/>
</dbReference>
<dbReference type="Gene3D" id="1.10.730.10">
    <property type="entry name" value="Isoleucyl-tRNA Synthetase, Domain 1"/>
    <property type="match status" value="1"/>
</dbReference>
<dbReference type="HAMAP" id="MF_00123">
    <property type="entry name" value="Arg_tRNA_synth"/>
    <property type="match status" value="1"/>
</dbReference>
<dbReference type="InterPro" id="IPR001412">
    <property type="entry name" value="aa-tRNA-synth_I_CS"/>
</dbReference>
<dbReference type="InterPro" id="IPR001278">
    <property type="entry name" value="Arg-tRNA-ligase"/>
</dbReference>
<dbReference type="InterPro" id="IPR005148">
    <property type="entry name" value="Arg-tRNA-synth_N"/>
</dbReference>
<dbReference type="InterPro" id="IPR036695">
    <property type="entry name" value="Arg-tRNA-synth_N_sf"/>
</dbReference>
<dbReference type="InterPro" id="IPR035684">
    <property type="entry name" value="ArgRS_core"/>
</dbReference>
<dbReference type="InterPro" id="IPR008909">
    <property type="entry name" value="DALR_anticod-bd"/>
</dbReference>
<dbReference type="InterPro" id="IPR014729">
    <property type="entry name" value="Rossmann-like_a/b/a_fold"/>
</dbReference>
<dbReference type="InterPro" id="IPR009080">
    <property type="entry name" value="tRNAsynth_Ia_anticodon-bd"/>
</dbReference>
<dbReference type="NCBIfam" id="TIGR00456">
    <property type="entry name" value="argS"/>
    <property type="match status" value="1"/>
</dbReference>
<dbReference type="PANTHER" id="PTHR11956:SF5">
    <property type="entry name" value="ARGININE--TRNA LIGASE, CYTOPLASMIC"/>
    <property type="match status" value="1"/>
</dbReference>
<dbReference type="PANTHER" id="PTHR11956">
    <property type="entry name" value="ARGINYL-TRNA SYNTHETASE"/>
    <property type="match status" value="1"/>
</dbReference>
<dbReference type="Pfam" id="PF03485">
    <property type="entry name" value="Arg_tRNA_synt_N"/>
    <property type="match status" value="1"/>
</dbReference>
<dbReference type="Pfam" id="PF05746">
    <property type="entry name" value="DALR_1"/>
    <property type="match status" value="1"/>
</dbReference>
<dbReference type="Pfam" id="PF00750">
    <property type="entry name" value="tRNA-synt_1d"/>
    <property type="match status" value="1"/>
</dbReference>
<dbReference type="PRINTS" id="PR01038">
    <property type="entry name" value="TRNASYNTHARG"/>
</dbReference>
<dbReference type="SMART" id="SM01016">
    <property type="entry name" value="Arg_tRNA_synt_N"/>
    <property type="match status" value="1"/>
</dbReference>
<dbReference type="SMART" id="SM00836">
    <property type="entry name" value="DALR_1"/>
    <property type="match status" value="1"/>
</dbReference>
<dbReference type="SUPFAM" id="SSF47323">
    <property type="entry name" value="Anticodon-binding domain of a subclass of class I aminoacyl-tRNA synthetases"/>
    <property type="match status" value="1"/>
</dbReference>
<dbReference type="SUPFAM" id="SSF55190">
    <property type="entry name" value="Arginyl-tRNA synthetase (ArgRS), N-terminal 'additional' domain"/>
    <property type="match status" value="1"/>
</dbReference>
<dbReference type="SUPFAM" id="SSF52374">
    <property type="entry name" value="Nucleotidylyl transferase"/>
    <property type="match status" value="1"/>
</dbReference>
<dbReference type="PROSITE" id="PS00178">
    <property type="entry name" value="AA_TRNA_LIGASE_I"/>
    <property type="match status" value="1"/>
</dbReference>
<gene>
    <name evidence="1" type="primary">argS</name>
    <name type="ordered locus">BMA10229_A1997</name>
</gene>
<feature type="chain" id="PRO_1000018001" description="Arginine--tRNA ligase">
    <location>
        <begin position="1"/>
        <end position="594"/>
    </location>
</feature>
<feature type="short sequence motif" description="'HIGH' region">
    <location>
        <begin position="139"/>
        <end position="149"/>
    </location>
</feature>